<reference key="1">
    <citation type="journal article" date="2009" name="BMC Genomics">
        <title>Evidence for niche adaptation in the genome of the bovine pathogen Streptococcus uberis.</title>
        <authorList>
            <person name="Ward P.N."/>
            <person name="Holden M.T.G."/>
            <person name="Leigh J.A."/>
            <person name="Lennard N."/>
            <person name="Bignell A."/>
            <person name="Barron A."/>
            <person name="Clark L."/>
            <person name="Quail M.A."/>
            <person name="Woodward J."/>
            <person name="Barrell B.G."/>
            <person name="Egan S.A."/>
            <person name="Field T.R."/>
            <person name="Maskell D."/>
            <person name="Kehoe M."/>
            <person name="Dowson C.G."/>
            <person name="Chanter N."/>
            <person name="Whatmore A.M."/>
            <person name="Bentley S.D."/>
            <person name="Parkhill J."/>
        </authorList>
    </citation>
    <scope>NUCLEOTIDE SEQUENCE [LARGE SCALE GENOMIC DNA]</scope>
    <source>
        <strain>ATCC BAA-854 / 0140J</strain>
    </source>
</reference>
<protein>
    <recommendedName>
        <fullName evidence="1">GTPase Era</fullName>
    </recommendedName>
</protein>
<name>ERA_STRU0</name>
<comment type="function">
    <text evidence="1">An essential GTPase that binds both GDP and GTP, with rapid nucleotide exchange. Plays a role in 16S rRNA processing and 30S ribosomal subunit biogenesis and possibly also in cell cycle regulation and energy metabolism.</text>
</comment>
<comment type="subunit">
    <text evidence="1">Monomer.</text>
</comment>
<comment type="subcellular location">
    <subcellularLocation>
        <location>Cytoplasm</location>
    </subcellularLocation>
    <subcellularLocation>
        <location evidence="1">Cell membrane</location>
        <topology evidence="1">Peripheral membrane protein</topology>
    </subcellularLocation>
</comment>
<comment type="similarity">
    <text evidence="1 2">Belongs to the TRAFAC class TrmE-Era-EngA-EngB-Septin-like GTPase superfamily. Era GTPase family.</text>
</comment>
<gene>
    <name evidence="1" type="primary">era</name>
    <name type="ordered locus">SUB0492</name>
</gene>
<accession>B9DRF9</accession>
<dbReference type="EMBL" id="AM946015">
    <property type="protein sequence ID" value="CAR41209.1"/>
    <property type="molecule type" value="Genomic_DNA"/>
</dbReference>
<dbReference type="RefSeq" id="WP_012658024.1">
    <property type="nucleotide sequence ID" value="NC_012004.1"/>
</dbReference>
<dbReference type="SMR" id="B9DRF9"/>
<dbReference type="STRING" id="218495.SUB0492"/>
<dbReference type="GeneID" id="93825791"/>
<dbReference type="KEGG" id="sub:SUB0492"/>
<dbReference type="eggNOG" id="COG1159">
    <property type="taxonomic scope" value="Bacteria"/>
</dbReference>
<dbReference type="HOGENOM" id="CLU_038009_1_0_9"/>
<dbReference type="OrthoDB" id="9805918at2"/>
<dbReference type="Proteomes" id="UP000000449">
    <property type="component" value="Chromosome"/>
</dbReference>
<dbReference type="GO" id="GO:0005829">
    <property type="term" value="C:cytosol"/>
    <property type="evidence" value="ECO:0007669"/>
    <property type="project" value="TreeGrafter"/>
</dbReference>
<dbReference type="GO" id="GO:0005886">
    <property type="term" value="C:plasma membrane"/>
    <property type="evidence" value="ECO:0007669"/>
    <property type="project" value="UniProtKB-SubCell"/>
</dbReference>
<dbReference type="GO" id="GO:0005525">
    <property type="term" value="F:GTP binding"/>
    <property type="evidence" value="ECO:0007669"/>
    <property type="project" value="UniProtKB-UniRule"/>
</dbReference>
<dbReference type="GO" id="GO:0003924">
    <property type="term" value="F:GTPase activity"/>
    <property type="evidence" value="ECO:0007669"/>
    <property type="project" value="UniProtKB-UniRule"/>
</dbReference>
<dbReference type="GO" id="GO:0043024">
    <property type="term" value="F:ribosomal small subunit binding"/>
    <property type="evidence" value="ECO:0007669"/>
    <property type="project" value="TreeGrafter"/>
</dbReference>
<dbReference type="GO" id="GO:0070181">
    <property type="term" value="F:small ribosomal subunit rRNA binding"/>
    <property type="evidence" value="ECO:0007669"/>
    <property type="project" value="UniProtKB-UniRule"/>
</dbReference>
<dbReference type="GO" id="GO:0000028">
    <property type="term" value="P:ribosomal small subunit assembly"/>
    <property type="evidence" value="ECO:0007669"/>
    <property type="project" value="TreeGrafter"/>
</dbReference>
<dbReference type="CDD" id="cd04163">
    <property type="entry name" value="Era"/>
    <property type="match status" value="1"/>
</dbReference>
<dbReference type="CDD" id="cd22534">
    <property type="entry name" value="KH-II_Era"/>
    <property type="match status" value="1"/>
</dbReference>
<dbReference type="FunFam" id="3.30.300.20:FF:000003">
    <property type="entry name" value="GTPase Era"/>
    <property type="match status" value="1"/>
</dbReference>
<dbReference type="FunFam" id="3.40.50.300:FF:000094">
    <property type="entry name" value="GTPase Era"/>
    <property type="match status" value="1"/>
</dbReference>
<dbReference type="Gene3D" id="3.30.300.20">
    <property type="match status" value="1"/>
</dbReference>
<dbReference type="Gene3D" id="3.40.50.300">
    <property type="entry name" value="P-loop containing nucleotide triphosphate hydrolases"/>
    <property type="match status" value="1"/>
</dbReference>
<dbReference type="HAMAP" id="MF_00367">
    <property type="entry name" value="GTPase_Era"/>
    <property type="match status" value="1"/>
</dbReference>
<dbReference type="InterPro" id="IPR030388">
    <property type="entry name" value="G_ERA_dom"/>
</dbReference>
<dbReference type="InterPro" id="IPR006073">
    <property type="entry name" value="GTP-bd"/>
</dbReference>
<dbReference type="InterPro" id="IPR005662">
    <property type="entry name" value="GTPase_Era-like"/>
</dbReference>
<dbReference type="InterPro" id="IPR015946">
    <property type="entry name" value="KH_dom-like_a/b"/>
</dbReference>
<dbReference type="InterPro" id="IPR004044">
    <property type="entry name" value="KH_dom_type_2"/>
</dbReference>
<dbReference type="InterPro" id="IPR009019">
    <property type="entry name" value="KH_sf_prok-type"/>
</dbReference>
<dbReference type="InterPro" id="IPR027417">
    <property type="entry name" value="P-loop_NTPase"/>
</dbReference>
<dbReference type="InterPro" id="IPR005225">
    <property type="entry name" value="Small_GTP-bd"/>
</dbReference>
<dbReference type="NCBIfam" id="TIGR00436">
    <property type="entry name" value="era"/>
    <property type="match status" value="1"/>
</dbReference>
<dbReference type="NCBIfam" id="NF000908">
    <property type="entry name" value="PRK00089.1"/>
    <property type="match status" value="1"/>
</dbReference>
<dbReference type="NCBIfam" id="TIGR00231">
    <property type="entry name" value="small_GTP"/>
    <property type="match status" value="1"/>
</dbReference>
<dbReference type="PANTHER" id="PTHR42698">
    <property type="entry name" value="GTPASE ERA"/>
    <property type="match status" value="1"/>
</dbReference>
<dbReference type="PANTHER" id="PTHR42698:SF1">
    <property type="entry name" value="GTPASE ERA, MITOCHONDRIAL"/>
    <property type="match status" value="1"/>
</dbReference>
<dbReference type="Pfam" id="PF07650">
    <property type="entry name" value="KH_2"/>
    <property type="match status" value="1"/>
</dbReference>
<dbReference type="Pfam" id="PF01926">
    <property type="entry name" value="MMR_HSR1"/>
    <property type="match status" value="1"/>
</dbReference>
<dbReference type="SUPFAM" id="SSF52540">
    <property type="entry name" value="P-loop containing nucleoside triphosphate hydrolases"/>
    <property type="match status" value="1"/>
</dbReference>
<dbReference type="SUPFAM" id="SSF54814">
    <property type="entry name" value="Prokaryotic type KH domain (KH-domain type II)"/>
    <property type="match status" value="1"/>
</dbReference>
<dbReference type="PROSITE" id="PS51713">
    <property type="entry name" value="G_ERA"/>
    <property type="match status" value="1"/>
</dbReference>
<dbReference type="PROSITE" id="PS50823">
    <property type="entry name" value="KH_TYPE_2"/>
    <property type="match status" value="1"/>
</dbReference>
<feature type="chain" id="PRO_1000189977" description="GTPase Era">
    <location>
        <begin position="1"/>
        <end position="299"/>
    </location>
</feature>
<feature type="domain" description="Era-type G" evidence="2">
    <location>
        <begin position="4"/>
        <end position="171"/>
    </location>
</feature>
<feature type="domain" description="KH type-2" evidence="1">
    <location>
        <begin position="202"/>
        <end position="280"/>
    </location>
</feature>
<feature type="region of interest" description="G1" evidence="2">
    <location>
        <begin position="12"/>
        <end position="19"/>
    </location>
</feature>
<feature type="region of interest" description="G2" evidence="2">
    <location>
        <begin position="38"/>
        <end position="42"/>
    </location>
</feature>
<feature type="region of interest" description="G3" evidence="2">
    <location>
        <begin position="59"/>
        <end position="62"/>
    </location>
</feature>
<feature type="region of interest" description="G4" evidence="2">
    <location>
        <begin position="121"/>
        <end position="124"/>
    </location>
</feature>
<feature type="region of interest" description="G5" evidence="2">
    <location>
        <begin position="150"/>
        <end position="152"/>
    </location>
</feature>
<feature type="binding site" evidence="1">
    <location>
        <begin position="12"/>
        <end position="19"/>
    </location>
    <ligand>
        <name>GTP</name>
        <dbReference type="ChEBI" id="CHEBI:37565"/>
    </ligand>
</feature>
<feature type="binding site" evidence="1">
    <location>
        <begin position="59"/>
        <end position="63"/>
    </location>
    <ligand>
        <name>GTP</name>
        <dbReference type="ChEBI" id="CHEBI:37565"/>
    </ligand>
</feature>
<feature type="binding site" evidence="1">
    <location>
        <begin position="121"/>
        <end position="124"/>
    </location>
    <ligand>
        <name>GTP</name>
        <dbReference type="ChEBI" id="CHEBI:37565"/>
    </ligand>
</feature>
<evidence type="ECO:0000255" key="1">
    <source>
        <dbReference type="HAMAP-Rule" id="MF_00367"/>
    </source>
</evidence>
<evidence type="ECO:0000255" key="2">
    <source>
        <dbReference type="PROSITE-ProRule" id="PRU01050"/>
    </source>
</evidence>
<organism>
    <name type="scientific">Streptococcus uberis (strain ATCC BAA-854 / 0140J)</name>
    <dbReference type="NCBI Taxonomy" id="218495"/>
    <lineage>
        <taxon>Bacteria</taxon>
        <taxon>Bacillati</taxon>
        <taxon>Bacillota</taxon>
        <taxon>Bacilli</taxon>
        <taxon>Lactobacillales</taxon>
        <taxon>Streptococcaceae</taxon>
        <taxon>Streptococcus</taxon>
    </lineage>
</organism>
<sequence>MSFKSGFVAILGRPNVGKSTFLNHVMGQKIAIMSDKAQTTRNKIMGIYTTDKEQIVFIDTPGIHKPKTALGDFMVESAYSTLREVDTVLFMVPADEKRGKGDDMIMERLKNAKIPVILVINKIDKVHPDQLLEQIDDFRSQMDFKEVVPISALQGNNVPTLISLLTDNLEEGFQYFPEDQITDHPERFLVSEMIREKVLHLTQQEIPHSVAVVIESMKRDQVTDKVHIRATIMVERDSQKGIIIGKQGSMLKKIGQMARRDIELMLGDKVYLETWVKVKKNWRDKKLDLADFGYNQKEY</sequence>
<proteinExistence type="inferred from homology"/>
<keyword id="KW-1003">Cell membrane</keyword>
<keyword id="KW-0963">Cytoplasm</keyword>
<keyword id="KW-0342">GTP-binding</keyword>
<keyword id="KW-0472">Membrane</keyword>
<keyword id="KW-0547">Nucleotide-binding</keyword>
<keyword id="KW-1185">Reference proteome</keyword>
<keyword id="KW-0690">Ribosome biogenesis</keyword>
<keyword id="KW-0694">RNA-binding</keyword>
<keyword id="KW-0699">rRNA-binding</keyword>